<feature type="chain" id="PRO_1000201197" description="3-hydroxydecanoyl-[acyl-carrier-protein] dehydratase">
    <location>
        <begin position="1"/>
        <end position="175"/>
    </location>
</feature>
<feature type="active site" evidence="1">
    <location>
        <position position="71"/>
    </location>
</feature>
<evidence type="ECO:0000255" key="1">
    <source>
        <dbReference type="HAMAP-Rule" id="MF_00405"/>
    </source>
</evidence>
<name>FABA_RHOPT</name>
<keyword id="KW-0963">Cytoplasm</keyword>
<keyword id="KW-0275">Fatty acid biosynthesis</keyword>
<keyword id="KW-0276">Fatty acid metabolism</keyword>
<keyword id="KW-0413">Isomerase</keyword>
<keyword id="KW-0444">Lipid biosynthesis</keyword>
<keyword id="KW-0443">Lipid metabolism</keyword>
<keyword id="KW-0456">Lyase</keyword>
<proteinExistence type="inferred from homology"/>
<sequence>MRDRRSSYEYEDLLACGRGELFGAGNAQLPLPPMLMFDRITTITEDGGEFGKGHVRAELDVNPDLWFFACHFKNDPVMPGCLGLDAMWQMVGFFLGWVGGEGPGRALGLGELKFTGQVLPNISKVVYNVDIKRVMRSKLWLGIADGWLSADDEIIYRAKDLKVGLFKQTAQPVAG</sequence>
<reference key="1">
    <citation type="submission" date="2008-05" db="EMBL/GenBank/DDBJ databases">
        <title>Complete sequence of Rhodopseudomonas palustris TIE-1.</title>
        <authorList>
            <consortium name="US DOE Joint Genome Institute"/>
            <person name="Lucas S."/>
            <person name="Copeland A."/>
            <person name="Lapidus A."/>
            <person name="Glavina del Rio T."/>
            <person name="Dalin E."/>
            <person name="Tice H."/>
            <person name="Pitluck S."/>
            <person name="Chain P."/>
            <person name="Malfatti S."/>
            <person name="Shin M."/>
            <person name="Vergez L."/>
            <person name="Lang D."/>
            <person name="Schmutz J."/>
            <person name="Larimer F."/>
            <person name="Land M."/>
            <person name="Hauser L."/>
            <person name="Kyrpides N."/>
            <person name="Mikhailova N."/>
            <person name="Emerson D."/>
            <person name="Newman D.K."/>
            <person name="Roden E."/>
            <person name="Richardson P."/>
        </authorList>
    </citation>
    <scope>NUCLEOTIDE SEQUENCE [LARGE SCALE GENOMIC DNA]</scope>
    <source>
        <strain>TIE-1</strain>
    </source>
</reference>
<protein>
    <recommendedName>
        <fullName evidence="1">3-hydroxydecanoyl-[acyl-carrier-protein] dehydratase</fullName>
        <ecNumber evidence="1">4.2.1.59</ecNumber>
    </recommendedName>
    <alternativeName>
        <fullName evidence="1">3-hydroxyacyl-[acyl-carrier-protein] dehydratase FabA</fullName>
    </alternativeName>
    <alternativeName>
        <fullName evidence="1">Beta-hydroxydecanoyl thioester dehydrase</fullName>
    </alternativeName>
    <alternativeName>
        <fullName evidence="1">Trans-2-decenoyl-[acyl-carrier-protein] isomerase</fullName>
        <ecNumber evidence="1">5.3.3.14</ecNumber>
    </alternativeName>
</protein>
<organism>
    <name type="scientific">Rhodopseudomonas palustris (strain TIE-1)</name>
    <dbReference type="NCBI Taxonomy" id="395960"/>
    <lineage>
        <taxon>Bacteria</taxon>
        <taxon>Pseudomonadati</taxon>
        <taxon>Pseudomonadota</taxon>
        <taxon>Alphaproteobacteria</taxon>
        <taxon>Hyphomicrobiales</taxon>
        <taxon>Nitrobacteraceae</taxon>
        <taxon>Rhodopseudomonas</taxon>
    </lineage>
</organism>
<gene>
    <name evidence="1" type="primary">fabA</name>
    <name type="ordered locus">Rpal_0429</name>
</gene>
<comment type="function">
    <text evidence="1">Necessary for the introduction of cis unsaturation into fatty acids. Catalyzes the dehydration of (3R)-3-hydroxydecanoyl-ACP to E-(2)-decenoyl-ACP and then its isomerization to Z-(3)-decenoyl-ACP. Can catalyze the dehydratase reaction for beta-hydroxyacyl-ACPs with saturated chain lengths up to 16:0, being most active on intermediate chain length.</text>
</comment>
<comment type="catalytic activity">
    <reaction evidence="1">
        <text>a (3R)-hydroxyacyl-[ACP] = a (2E)-enoyl-[ACP] + H2O</text>
        <dbReference type="Rhea" id="RHEA:13097"/>
        <dbReference type="Rhea" id="RHEA-COMP:9925"/>
        <dbReference type="Rhea" id="RHEA-COMP:9945"/>
        <dbReference type="ChEBI" id="CHEBI:15377"/>
        <dbReference type="ChEBI" id="CHEBI:78784"/>
        <dbReference type="ChEBI" id="CHEBI:78827"/>
        <dbReference type="EC" id="4.2.1.59"/>
    </reaction>
</comment>
<comment type="catalytic activity">
    <reaction evidence="1">
        <text>(3R)-hydroxydecanoyl-[ACP] = (2E)-decenoyl-[ACP] + H2O</text>
        <dbReference type="Rhea" id="RHEA:41860"/>
        <dbReference type="Rhea" id="RHEA-COMP:9638"/>
        <dbReference type="Rhea" id="RHEA-COMP:9639"/>
        <dbReference type="ChEBI" id="CHEBI:15377"/>
        <dbReference type="ChEBI" id="CHEBI:78466"/>
        <dbReference type="ChEBI" id="CHEBI:78467"/>
    </reaction>
</comment>
<comment type="catalytic activity">
    <reaction evidence="1">
        <text>(2E)-decenoyl-[ACP] = (3Z)-decenoyl-[ACP]</text>
        <dbReference type="Rhea" id="RHEA:23568"/>
        <dbReference type="Rhea" id="RHEA-COMP:9639"/>
        <dbReference type="Rhea" id="RHEA-COMP:9927"/>
        <dbReference type="ChEBI" id="CHEBI:78467"/>
        <dbReference type="ChEBI" id="CHEBI:78798"/>
        <dbReference type="EC" id="5.3.3.14"/>
    </reaction>
</comment>
<comment type="pathway">
    <text evidence="1">Lipid metabolism; fatty acid biosynthesis.</text>
</comment>
<comment type="subunit">
    <text evidence="1">Homodimer.</text>
</comment>
<comment type="subcellular location">
    <subcellularLocation>
        <location evidence="1">Cytoplasm</location>
    </subcellularLocation>
</comment>
<comment type="similarity">
    <text evidence="1">Belongs to the thioester dehydratase family. FabA subfamily.</text>
</comment>
<accession>B3QAA3</accession>
<dbReference type="EC" id="4.2.1.59" evidence="1"/>
<dbReference type="EC" id="5.3.3.14" evidence="1"/>
<dbReference type="EMBL" id="CP001096">
    <property type="protein sequence ID" value="ACE98989.1"/>
    <property type="molecule type" value="Genomic_DNA"/>
</dbReference>
<dbReference type="RefSeq" id="WP_011155993.1">
    <property type="nucleotide sequence ID" value="NC_011004.1"/>
</dbReference>
<dbReference type="SMR" id="B3QAA3"/>
<dbReference type="GeneID" id="66891440"/>
<dbReference type="KEGG" id="rpt:Rpal_0429"/>
<dbReference type="HOGENOM" id="CLU_097925_0_0_5"/>
<dbReference type="OrthoDB" id="9786735at2"/>
<dbReference type="UniPathway" id="UPA00094"/>
<dbReference type="Proteomes" id="UP000001725">
    <property type="component" value="Chromosome"/>
</dbReference>
<dbReference type="GO" id="GO:0005737">
    <property type="term" value="C:cytoplasm"/>
    <property type="evidence" value="ECO:0007669"/>
    <property type="project" value="UniProtKB-SubCell"/>
</dbReference>
<dbReference type="GO" id="GO:0019171">
    <property type="term" value="F:(3R)-hydroxyacyl-[acyl-carrier-protein] dehydratase activity"/>
    <property type="evidence" value="ECO:0007669"/>
    <property type="project" value="UniProtKB-UniRule"/>
</dbReference>
<dbReference type="GO" id="GO:0034017">
    <property type="term" value="F:trans-2-decenoyl-acyl-carrier-protein isomerase activity"/>
    <property type="evidence" value="ECO:0007669"/>
    <property type="project" value="UniProtKB-UniRule"/>
</dbReference>
<dbReference type="GO" id="GO:0006636">
    <property type="term" value="P:unsaturated fatty acid biosynthetic process"/>
    <property type="evidence" value="ECO:0007669"/>
    <property type="project" value="UniProtKB-UniRule"/>
</dbReference>
<dbReference type="CDD" id="cd01287">
    <property type="entry name" value="FabA"/>
    <property type="match status" value="1"/>
</dbReference>
<dbReference type="Gene3D" id="3.10.129.10">
    <property type="entry name" value="Hotdog Thioesterase"/>
    <property type="match status" value="1"/>
</dbReference>
<dbReference type="HAMAP" id="MF_00405">
    <property type="entry name" value="FabA"/>
    <property type="match status" value="1"/>
</dbReference>
<dbReference type="InterPro" id="IPR010083">
    <property type="entry name" value="FabA"/>
</dbReference>
<dbReference type="InterPro" id="IPR013114">
    <property type="entry name" value="FabA_FabZ"/>
</dbReference>
<dbReference type="InterPro" id="IPR029069">
    <property type="entry name" value="HotDog_dom_sf"/>
</dbReference>
<dbReference type="NCBIfam" id="TIGR01749">
    <property type="entry name" value="fabA"/>
    <property type="match status" value="1"/>
</dbReference>
<dbReference type="NCBIfam" id="NF003509">
    <property type="entry name" value="PRK05174.1"/>
    <property type="match status" value="1"/>
</dbReference>
<dbReference type="PANTHER" id="PTHR30272">
    <property type="entry name" value="3-HYDROXYACYL-[ACYL-CARRIER-PROTEIN] DEHYDRATASE"/>
    <property type="match status" value="1"/>
</dbReference>
<dbReference type="PANTHER" id="PTHR30272:SF8">
    <property type="entry name" value="3-HYDROXYDECANOYL-[ACYL-CARRIER-PROTEIN] DEHYDRATASE"/>
    <property type="match status" value="1"/>
</dbReference>
<dbReference type="Pfam" id="PF07977">
    <property type="entry name" value="FabA"/>
    <property type="match status" value="1"/>
</dbReference>
<dbReference type="SUPFAM" id="SSF54637">
    <property type="entry name" value="Thioesterase/thiol ester dehydrase-isomerase"/>
    <property type="match status" value="1"/>
</dbReference>